<accession>D0E8I4</accession>
<keyword id="KW-0223">Dioxygenase</keyword>
<keyword id="KW-0408">Iron</keyword>
<keyword id="KW-0479">Metal-binding</keyword>
<keyword id="KW-0560">Oxidoreductase</keyword>
<evidence type="ECO:0000250" key="1">
    <source>
        <dbReference type="UniProtKB" id="Q1GNW5"/>
    </source>
</evidence>
<evidence type="ECO:0000250" key="2">
    <source>
        <dbReference type="UniProtKB" id="Q2TDY4"/>
    </source>
</evidence>
<evidence type="ECO:0000269" key="3">
    <source>
    </source>
</evidence>
<evidence type="ECO:0000303" key="4">
    <source>
    </source>
</evidence>
<evidence type="ECO:0000303" key="5">
    <source>
    </source>
</evidence>
<evidence type="ECO:0000305" key="6"/>
<evidence type="ECO:0000305" key="7">
    <source>
    </source>
</evidence>
<evidence type="ECO:0000312" key="8">
    <source>
        <dbReference type="EMBL" id="ACU83549.1"/>
    </source>
</evidence>
<proteinExistence type="evidence at protein level"/>
<comment type="function">
    <text evidence="3 7">Involved in the degradation of the organophosphonate 2-aminoethylphosphonic acid (2-AEP) (Probable). Catalyzes the hydroxylation of 2-aminoethylphosphonic acid to yield (2-amino-1-hydroxyethyl)phosphonic acid (PubMed:22564006).</text>
</comment>
<comment type="catalytic activity">
    <reaction evidence="3">
        <text>(2-aminoethyl)phosphonate + 2-oxoglutarate + O2 = (1R)-(2-amino-1-hydroxyethyl)phosphonate + succinate + CO2</text>
        <dbReference type="Rhea" id="RHEA:41440"/>
        <dbReference type="ChEBI" id="CHEBI:15379"/>
        <dbReference type="ChEBI" id="CHEBI:16526"/>
        <dbReference type="ChEBI" id="CHEBI:16810"/>
        <dbReference type="ChEBI" id="CHEBI:30031"/>
        <dbReference type="ChEBI" id="CHEBI:57418"/>
        <dbReference type="ChEBI" id="CHEBI:141612"/>
        <dbReference type="EC" id="1.14.11.46"/>
    </reaction>
</comment>
<comment type="cofactor">
    <cofactor evidence="3">
        <name>Fe(2+)</name>
        <dbReference type="ChEBI" id="CHEBI:29033"/>
    </cofactor>
    <text evidence="2">Binds 1 Fe(2+) ion.</text>
</comment>
<comment type="activity regulation">
    <text evidence="3">Activity is enhanced by ascorbate.</text>
</comment>
<comment type="similarity">
    <text evidence="6">Belongs to the PhyH family.</text>
</comment>
<sequence length="262" mass="30264">MSYFTQEQKTQWKDNGFVHLKGFLNEALAQDIKDWTQELYEWEEAPGKWMKYFETSSDTGERLLCRVENFIDYHKGIKGFLCGEMIYGMVSELMGEQAVLFKEKINFKYPGGAGFAYHQDAPAFTSFGQKYHITMMVSVDASNEENGCLRMAHGFSEEKTLEQEPDGTVCKKLAAKLDWRPLETGPGDLVLFNSYVPHYSEANTSDRSRRAMFITYNRLSEGEKRLDYFKDKREKFPPEAERIEGKDYSSAESLYNLGNPIK</sequence>
<dbReference type="EC" id="1.14.11.46" evidence="3"/>
<dbReference type="EMBL" id="GQ422594">
    <property type="protein sequence ID" value="ACU83549.1"/>
    <property type="molecule type" value="Genomic_DNA"/>
</dbReference>
<dbReference type="SMR" id="D0E8I4"/>
<dbReference type="KEGG" id="ag:ACU83549"/>
<dbReference type="BioCyc" id="MetaCyc:MONOMER-18484"/>
<dbReference type="GO" id="GO:0016706">
    <property type="term" value="F:2-oxoglutarate-dependent dioxygenase activity"/>
    <property type="evidence" value="ECO:0007669"/>
    <property type="project" value="UniProtKB-ARBA"/>
</dbReference>
<dbReference type="GO" id="GO:0005506">
    <property type="term" value="F:iron ion binding"/>
    <property type="evidence" value="ECO:0007669"/>
    <property type="project" value="UniProtKB-ARBA"/>
</dbReference>
<dbReference type="Gene3D" id="2.60.120.620">
    <property type="entry name" value="q2cbj1_9rhob like domain"/>
    <property type="match status" value="1"/>
</dbReference>
<dbReference type="InterPro" id="IPR008775">
    <property type="entry name" value="Phytyl_CoA_dOase-like"/>
</dbReference>
<dbReference type="PANTHER" id="PTHR20883:SF48">
    <property type="entry name" value="ECTOINE DIOXYGENASE"/>
    <property type="match status" value="1"/>
</dbReference>
<dbReference type="PANTHER" id="PTHR20883">
    <property type="entry name" value="PHYTANOYL-COA DIOXYGENASE DOMAIN CONTAINING 1"/>
    <property type="match status" value="1"/>
</dbReference>
<dbReference type="Pfam" id="PF05721">
    <property type="entry name" value="PhyH"/>
    <property type="match status" value="1"/>
</dbReference>
<dbReference type="SUPFAM" id="SSF51197">
    <property type="entry name" value="Clavaminate synthase-like"/>
    <property type="match status" value="1"/>
</dbReference>
<feature type="chain" id="PRO_0000445270" description="2-aminoethylphosphonate dioxygenase">
    <location>
        <begin position="1"/>
        <end position="262"/>
    </location>
</feature>
<feature type="binding site" evidence="1">
    <location>
        <position position="108"/>
    </location>
    <ligand>
        <name>2-oxoglutarate</name>
        <dbReference type="ChEBI" id="CHEBI:16810"/>
    </ligand>
</feature>
<feature type="binding site" evidence="2">
    <location>
        <position position="118"/>
    </location>
    <ligand>
        <name>Fe cation</name>
        <dbReference type="ChEBI" id="CHEBI:24875"/>
    </ligand>
</feature>
<feature type="binding site" evidence="2">
    <location>
        <position position="120"/>
    </location>
    <ligand>
        <name>Fe cation</name>
        <dbReference type="ChEBI" id="CHEBI:24875"/>
    </ligand>
</feature>
<feature type="binding site" evidence="2">
    <location>
        <position position="198"/>
    </location>
    <ligand>
        <name>Fe cation</name>
        <dbReference type="ChEBI" id="CHEBI:24875"/>
    </ligand>
</feature>
<reference key="1">
    <citation type="journal article" date="2010" name="Environ. Microbiol.">
        <title>Widespread known and novel phosphonate utilization pathways in marine bacteria revealed by functional screening and metagenomic analyses.</title>
        <authorList>
            <person name="Martinez A."/>
            <person name="Tyson G.W."/>
            <person name="DeLong E.F."/>
        </authorList>
    </citation>
    <scope>NUCLEOTIDE SEQUENCE [GENOMIC DNA]</scope>
    <scope>FUNCTION</scope>
</reference>
<reference key="2">
    <citation type="journal article" date="2012" name="J. Am. Chem. Soc.">
        <title>PhnY and PhnZ comprise a new oxidative pathway for enzymatic cleavage of a carbon-phosphorus bond.</title>
        <authorList>
            <person name="McSorley F.R."/>
            <person name="Wyatt P.B."/>
            <person name="Martinez A."/>
            <person name="DeLong E.F."/>
            <person name="Hove-Jensen B."/>
            <person name="Zechel D.L."/>
        </authorList>
    </citation>
    <scope>FUNCTION</scope>
    <scope>CATALYTIC ACTIVITY</scope>
    <scope>ACTIVITY REGULATION</scope>
    <scope>COFACTOR</scope>
</reference>
<gene>
    <name evidence="4" type="primary">phnY</name>
    <name evidence="8" type="ORF">ALOHA_HF130_AEPn_1_05c</name>
</gene>
<organism>
    <name type="scientific">Uncultured bacterium HF130_AEPn_1</name>
    <dbReference type="NCBI Taxonomy" id="663362"/>
    <lineage>
        <taxon>Bacteria</taxon>
        <taxon>environmental samples</taxon>
    </lineage>
</organism>
<protein>
    <recommendedName>
        <fullName evidence="5">2-aminoethylphosphonate dioxygenase</fullName>
        <ecNumber evidence="3">1.14.11.46</ecNumber>
    </recommendedName>
    <alternativeName>
        <fullName evidence="4">2-oxoglutarate dioxygensase</fullName>
    </alternativeName>
    <alternativeName>
        <fullName evidence="5">Alpha-ketoglutarate/Fe(II)-dependent dioxygenase PhnY</fullName>
    </alternativeName>
</protein>
<name>PHNY_UNCHF</name>